<feature type="chain" id="PRO_0000186024" description="Maleylacetoacetate isomerase">
    <location>
        <begin position="1"/>
        <end position="216"/>
    </location>
</feature>
<feature type="domain" description="GST N-terminal">
    <location>
        <begin position="4"/>
        <end position="87"/>
    </location>
</feature>
<feature type="domain" description="GST C-terminal">
    <location>
        <begin position="92"/>
        <end position="212"/>
    </location>
</feature>
<feature type="binding site" evidence="1">
    <location>
        <begin position="14"/>
        <end position="19"/>
    </location>
    <ligand>
        <name>glutathione</name>
        <dbReference type="ChEBI" id="CHEBI:57925"/>
    </ligand>
</feature>
<feature type="binding site" evidence="1">
    <location>
        <position position="45"/>
    </location>
    <ligand>
        <name>glutathione</name>
        <dbReference type="ChEBI" id="CHEBI:57925"/>
    </ligand>
</feature>
<feature type="binding site" evidence="1">
    <location>
        <position position="59"/>
    </location>
    <ligand>
        <name>glutathione</name>
        <dbReference type="ChEBI" id="CHEBI:57925"/>
    </ligand>
</feature>
<feature type="binding site" evidence="1">
    <location>
        <begin position="71"/>
        <end position="72"/>
    </location>
    <ligand>
        <name>glutathione</name>
        <dbReference type="ChEBI" id="CHEBI:57925"/>
    </ligand>
</feature>
<feature type="binding site" evidence="1">
    <location>
        <position position="111"/>
    </location>
    <ligand>
        <name>glutathione</name>
        <dbReference type="ChEBI" id="CHEBI:57925"/>
    </ligand>
</feature>
<feature type="binding site" evidence="1">
    <location>
        <begin position="115"/>
        <end position="117"/>
    </location>
    <ligand>
        <name>glutathione</name>
        <dbReference type="ChEBI" id="CHEBI:57925"/>
    </ligand>
</feature>
<feature type="modified residue" description="N-acetylmethionine" evidence="2">
    <location>
        <position position="1"/>
    </location>
</feature>
<feature type="modified residue" description="N6-succinyllysine" evidence="3">
    <location>
        <position position="57"/>
    </location>
</feature>
<feature type="modified residue" description="Phosphothreonine" evidence="3">
    <location>
        <position position="136"/>
    </location>
</feature>
<feature type="modified residue" description="Phosphoserine" evidence="6">
    <location>
        <position position="137"/>
    </location>
</feature>
<feature type="modified residue" description="N6-succinyllysine" evidence="3">
    <location>
        <position position="177"/>
    </location>
</feature>
<feature type="modified residue" description="Phosphoserine" evidence="6">
    <location>
        <position position="181"/>
    </location>
</feature>
<organism>
    <name type="scientific">Rattus norvegicus</name>
    <name type="common">Rat</name>
    <dbReference type="NCBI Taxonomy" id="10116"/>
    <lineage>
        <taxon>Eukaryota</taxon>
        <taxon>Metazoa</taxon>
        <taxon>Chordata</taxon>
        <taxon>Craniata</taxon>
        <taxon>Vertebrata</taxon>
        <taxon>Euteleostomi</taxon>
        <taxon>Mammalia</taxon>
        <taxon>Eutheria</taxon>
        <taxon>Euarchontoglires</taxon>
        <taxon>Glires</taxon>
        <taxon>Rodentia</taxon>
        <taxon>Myomorpha</taxon>
        <taxon>Muroidea</taxon>
        <taxon>Muridae</taxon>
        <taxon>Murinae</taxon>
        <taxon>Rattus</taxon>
    </lineage>
</organism>
<dbReference type="EC" id="5.2.1.2"/>
<dbReference type="EC" id="2.5.1.18"/>
<dbReference type="EMBL" id="FJ179410">
    <property type="protein sequence ID" value="ACI32127.1"/>
    <property type="molecule type" value="mRNA"/>
</dbReference>
<dbReference type="EMBL" id="CH473982">
    <property type="protein sequence ID" value="EDL81627.1"/>
    <property type="molecule type" value="Genomic_DNA"/>
</dbReference>
<dbReference type="EMBL" id="BC158833">
    <property type="protein sequence ID" value="AAI58834.1"/>
    <property type="molecule type" value="mRNA"/>
</dbReference>
<dbReference type="RefSeq" id="NP_001102915.1">
    <property type="nucleotide sequence ID" value="NM_001109445.1"/>
</dbReference>
<dbReference type="SMR" id="P57113"/>
<dbReference type="FunCoup" id="P57113">
    <property type="interactions" value="1520"/>
</dbReference>
<dbReference type="IntAct" id="P57113">
    <property type="interactions" value="1"/>
</dbReference>
<dbReference type="STRING" id="10116.ENSRNOP00000065390"/>
<dbReference type="ChEMBL" id="CHEMBL4630822"/>
<dbReference type="iPTMnet" id="P57113"/>
<dbReference type="PhosphoSitePlus" id="P57113"/>
<dbReference type="SwissPalm" id="P57113"/>
<dbReference type="jPOST" id="P57113"/>
<dbReference type="PaxDb" id="10116-ENSRNOP00000065390"/>
<dbReference type="GeneID" id="681913"/>
<dbReference type="KEGG" id="rno:681913"/>
<dbReference type="AGR" id="RGD:1589363"/>
<dbReference type="CTD" id="2954"/>
<dbReference type="RGD" id="1589363">
    <property type="gene designation" value="Gstz1"/>
</dbReference>
<dbReference type="VEuPathDB" id="HostDB:ENSRNOG00000047708"/>
<dbReference type="eggNOG" id="KOG0868">
    <property type="taxonomic scope" value="Eukaryota"/>
</dbReference>
<dbReference type="InParanoid" id="P57113"/>
<dbReference type="OrthoDB" id="37840at9989"/>
<dbReference type="PhylomeDB" id="P57113"/>
<dbReference type="Reactome" id="R-RNO-156590">
    <property type="pathway name" value="Glutathione conjugation"/>
</dbReference>
<dbReference type="Reactome" id="R-RNO-204174">
    <property type="pathway name" value="Regulation of pyruvate dehydrogenase (PDH) complex"/>
</dbReference>
<dbReference type="Reactome" id="R-RNO-8963684">
    <property type="pathway name" value="Tyrosine catabolism"/>
</dbReference>
<dbReference type="UniPathway" id="UPA00139">
    <property type="reaction ID" value="UER00340"/>
</dbReference>
<dbReference type="PRO" id="PR:P57113"/>
<dbReference type="Proteomes" id="UP000002494">
    <property type="component" value="Chromosome 6"/>
</dbReference>
<dbReference type="Proteomes" id="UP000234681">
    <property type="component" value="Chromosome 6"/>
</dbReference>
<dbReference type="Bgee" id="ENSRNOG00000047708">
    <property type="expression patterns" value="Expressed in liver and 20 other cell types or tissues"/>
</dbReference>
<dbReference type="ExpressionAtlas" id="P57113">
    <property type="expression patterns" value="baseline and differential"/>
</dbReference>
<dbReference type="GO" id="GO:0005829">
    <property type="term" value="C:cytosol"/>
    <property type="evidence" value="ECO:0000314"/>
    <property type="project" value="FlyBase"/>
</dbReference>
<dbReference type="GO" id="GO:0005759">
    <property type="term" value="C:mitochondrial matrix"/>
    <property type="evidence" value="ECO:0000314"/>
    <property type="project" value="FlyBase"/>
</dbReference>
<dbReference type="GO" id="GO:0005739">
    <property type="term" value="C:mitochondrion"/>
    <property type="evidence" value="ECO:0000266"/>
    <property type="project" value="RGD"/>
</dbReference>
<dbReference type="GO" id="GO:0004364">
    <property type="term" value="F:glutathione transferase activity"/>
    <property type="evidence" value="ECO:0000266"/>
    <property type="project" value="RGD"/>
</dbReference>
<dbReference type="GO" id="GO:0042802">
    <property type="term" value="F:identical protein binding"/>
    <property type="evidence" value="ECO:0000266"/>
    <property type="project" value="RGD"/>
</dbReference>
<dbReference type="GO" id="GO:0016034">
    <property type="term" value="F:maleylacetoacetate isomerase activity"/>
    <property type="evidence" value="ECO:0000266"/>
    <property type="project" value="RGD"/>
</dbReference>
<dbReference type="GO" id="GO:0042803">
    <property type="term" value="F:protein homodimerization activity"/>
    <property type="evidence" value="ECO:0000266"/>
    <property type="project" value="RGD"/>
</dbReference>
<dbReference type="GO" id="GO:1990748">
    <property type="term" value="P:cellular detoxification"/>
    <property type="evidence" value="ECO:0000314"/>
    <property type="project" value="FlyBase"/>
</dbReference>
<dbReference type="GO" id="GO:0006749">
    <property type="term" value="P:glutathione metabolic process"/>
    <property type="evidence" value="ECO:0000266"/>
    <property type="project" value="RGD"/>
</dbReference>
<dbReference type="GO" id="GO:0006559">
    <property type="term" value="P:L-phenylalanine catabolic process"/>
    <property type="evidence" value="ECO:0000318"/>
    <property type="project" value="GO_Central"/>
</dbReference>
<dbReference type="GO" id="GO:0006572">
    <property type="term" value="P:tyrosine catabolic process"/>
    <property type="evidence" value="ECO:0007669"/>
    <property type="project" value="UniProtKB-KW"/>
</dbReference>
<dbReference type="CDD" id="cd03191">
    <property type="entry name" value="GST_C_Zeta"/>
    <property type="match status" value="1"/>
</dbReference>
<dbReference type="CDD" id="cd03042">
    <property type="entry name" value="GST_N_Zeta"/>
    <property type="match status" value="1"/>
</dbReference>
<dbReference type="FunFam" id="1.20.1050.10:FF:000010">
    <property type="entry name" value="Maleylacetoacetate isomerase isoform 1"/>
    <property type="match status" value="1"/>
</dbReference>
<dbReference type="FunFam" id="3.40.30.10:FF:000041">
    <property type="entry name" value="Maleylacetoacetate isomerase isoform 1"/>
    <property type="match status" value="1"/>
</dbReference>
<dbReference type="Gene3D" id="1.20.1050.10">
    <property type="match status" value="1"/>
</dbReference>
<dbReference type="Gene3D" id="3.40.30.10">
    <property type="entry name" value="Glutaredoxin"/>
    <property type="match status" value="1"/>
</dbReference>
<dbReference type="InterPro" id="IPR010987">
    <property type="entry name" value="Glutathione-S-Trfase_C-like"/>
</dbReference>
<dbReference type="InterPro" id="IPR036282">
    <property type="entry name" value="Glutathione-S-Trfase_C_sf"/>
</dbReference>
<dbReference type="InterPro" id="IPR040079">
    <property type="entry name" value="Glutathione_S-Trfase"/>
</dbReference>
<dbReference type="InterPro" id="IPR004045">
    <property type="entry name" value="Glutathione_S-Trfase_N"/>
</dbReference>
<dbReference type="InterPro" id="IPR004046">
    <property type="entry name" value="GST_C"/>
</dbReference>
<dbReference type="InterPro" id="IPR005955">
    <property type="entry name" value="GST_Zeta"/>
</dbReference>
<dbReference type="InterPro" id="IPR034330">
    <property type="entry name" value="GST_Zeta_C"/>
</dbReference>
<dbReference type="InterPro" id="IPR034333">
    <property type="entry name" value="GST_Zeta_N"/>
</dbReference>
<dbReference type="InterPro" id="IPR036249">
    <property type="entry name" value="Thioredoxin-like_sf"/>
</dbReference>
<dbReference type="NCBIfam" id="TIGR01262">
    <property type="entry name" value="maiA"/>
    <property type="match status" value="1"/>
</dbReference>
<dbReference type="PANTHER" id="PTHR42673">
    <property type="entry name" value="MALEYLACETOACETATE ISOMERASE"/>
    <property type="match status" value="1"/>
</dbReference>
<dbReference type="PANTHER" id="PTHR42673:SF4">
    <property type="entry name" value="MALEYLACETOACETATE ISOMERASE"/>
    <property type="match status" value="1"/>
</dbReference>
<dbReference type="Pfam" id="PF14497">
    <property type="entry name" value="GST_C_3"/>
    <property type="match status" value="1"/>
</dbReference>
<dbReference type="Pfam" id="PF13409">
    <property type="entry name" value="GST_N_2"/>
    <property type="match status" value="1"/>
</dbReference>
<dbReference type="SFLD" id="SFLDS00019">
    <property type="entry name" value="Glutathione_Transferase_(cytos"/>
    <property type="match status" value="1"/>
</dbReference>
<dbReference type="SFLD" id="SFLDG00358">
    <property type="entry name" value="Main_(cytGST)"/>
    <property type="match status" value="1"/>
</dbReference>
<dbReference type="SUPFAM" id="SSF47616">
    <property type="entry name" value="GST C-terminal domain-like"/>
    <property type="match status" value="1"/>
</dbReference>
<dbReference type="SUPFAM" id="SSF52833">
    <property type="entry name" value="Thioredoxin-like"/>
    <property type="match status" value="1"/>
</dbReference>
<dbReference type="PROSITE" id="PS50405">
    <property type="entry name" value="GST_CTER"/>
    <property type="match status" value="1"/>
</dbReference>
<dbReference type="PROSITE" id="PS50404">
    <property type="entry name" value="GST_NTER"/>
    <property type="match status" value="1"/>
</dbReference>
<gene>
    <name type="primary">Gstz1</name>
</gene>
<name>MAAI_RAT</name>
<keyword id="KW-0007">Acetylation</keyword>
<keyword id="KW-0963">Cytoplasm</keyword>
<keyword id="KW-0903">Direct protein sequencing</keyword>
<keyword id="KW-0413">Isomerase</keyword>
<keyword id="KW-0511">Multifunctional enzyme</keyword>
<keyword id="KW-0585">Phenylalanine catabolism</keyword>
<keyword id="KW-0597">Phosphoprotein</keyword>
<keyword id="KW-1185">Reference proteome</keyword>
<keyword id="KW-0808">Transferase</keyword>
<keyword id="KW-0828">Tyrosine catabolism</keyword>
<comment type="function">
    <text evidence="1 4">Probable bifunctional enzyme showing minimal glutathione-conjugating activity with ethacrynic acid and 7-chloro-4-nitrobenz-2-oxa-1, 3-diazole and maleylacetoacetate isomerase activity. Also has low glutathione peroxidase activity with t-butyl and cumene hydroperoxides (By similarity). Is able to catalyze the glutathione dependent oxygenation of dichloroacetic acid to glyoxylic acid.</text>
</comment>
<comment type="catalytic activity">
    <reaction evidence="4">
        <text>4-maleylacetoacetate = 4-fumarylacetoacetate</text>
        <dbReference type="Rhea" id="RHEA:14817"/>
        <dbReference type="ChEBI" id="CHEBI:17105"/>
        <dbReference type="ChEBI" id="CHEBI:18034"/>
        <dbReference type="EC" id="5.2.1.2"/>
    </reaction>
</comment>
<comment type="catalytic activity">
    <reaction evidence="4">
        <text>RX + glutathione = an S-substituted glutathione + a halide anion + H(+)</text>
        <dbReference type="Rhea" id="RHEA:16437"/>
        <dbReference type="ChEBI" id="CHEBI:15378"/>
        <dbReference type="ChEBI" id="CHEBI:16042"/>
        <dbReference type="ChEBI" id="CHEBI:17792"/>
        <dbReference type="ChEBI" id="CHEBI:57925"/>
        <dbReference type="ChEBI" id="CHEBI:90779"/>
        <dbReference type="EC" id="2.5.1.18"/>
    </reaction>
</comment>
<comment type="cofactor">
    <cofactor evidence="1">
        <name>glutathione</name>
        <dbReference type="ChEBI" id="CHEBI:57925"/>
    </cofactor>
    <text evidence="1">Glutathione is required for the MAAI activity.</text>
</comment>
<comment type="biophysicochemical properties">
    <kinetics>
        <KM evidence="4">71.4 uM for dichloroacetic acid</KM>
        <KM evidence="4">59 uM for glutathione</KM>
        <Vmax evidence="4">1334.0 nmol/min/mg enzyme</Vmax>
    </kinetics>
</comment>
<comment type="pathway">
    <text>Amino-acid degradation; L-phenylalanine degradation; acetoacetate and fumarate from L-phenylalanine: step 5/6.</text>
</comment>
<comment type="subunit">
    <text evidence="1">Homodimer.</text>
</comment>
<comment type="subcellular location">
    <subcellularLocation>
        <location evidence="4">Cytoplasm</location>
    </subcellularLocation>
</comment>
<comment type="PTM">
    <text>The N-terminus is blocked.</text>
</comment>
<comment type="similarity">
    <text evidence="5">Belongs to the GST superfamily. Zeta family.</text>
</comment>
<evidence type="ECO:0000250" key="1"/>
<evidence type="ECO:0000250" key="2">
    <source>
        <dbReference type="UniProtKB" id="O43708"/>
    </source>
</evidence>
<evidence type="ECO:0000250" key="3">
    <source>
        <dbReference type="UniProtKB" id="Q9WVL0"/>
    </source>
</evidence>
<evidence type="ECO:0000269" key="4">
    <source>
    </source>
</evidence>
<evidence type="ECO:0000305" key="5"/>
<evidence type="ECO:0007744" key="6">
    <source>
    </source>
</evidence>
<proteinExistence type="evidence at protein level"/>
<reference key="1">
    <citation type="submission" date="2008-09" db="EMBL/GenBank/DDBJ databases">
        <title>Microcystin-induced variations in transcription of GSTs in Wistar rat.</title>
        <authorList>
            <person name="Li G."/>
            <person name="Xie P."/>
        </authorList>
    </citation>
    <scope>NUCLEOTIDE SEQUENCE [MRNA]</scope>
    <source>
        <strain>Wistar</strain>
    </source>
</reference>
<reference key="2">
    <citation type="submission" date="2005-07" db="EMBL/GenBank/DDBJ databases">
        <authorList>
            <person name="Mural R.J."/>
            <person name="Adams M.D."/>
            <person name="Myers E.W."/>
            <person name="Smith H.O."/>
            <person name="Venter J.C."/>
        </authorList>
    </citation>
    <scope>NUCLEOTIDE SEQUENCE [LARGE SCALE GENOMIC DNA]</scope>
</reference>
<reference key="3">
    <citation type="journal article" date="2004" name="Genome Res.">
        <title>The status, quality, and expansion of the NIH full-length cDNA project: the Mammalian Gene Collection (MGC).</title>
        <authorList>
            <consortium name="The MGC Project Team"/>
        </authorList>
    </citation>
    <scope>NUCLEOTIDE SEQUENCE [LARGE SCALE MRNA]</scope>
    <source>
        <tissue>Thymus</tissue>
    </source>
</reference>
<reference key="4">
    <citation type="journal article" date="1998" name="Biochem. J.">
        <title>Glutathione transferase zeta catalyses the oxygenation of the carcinogen dichloroacetic acid to glyoxylic acid.</title>
        <authorList>
            <person name="Tong Z."/>
            <person name="Board P.G."/>
            <person name="Anders M.W."/>
        </authorList>
    </citation>
    <scope>PROTEIN SEQUENCE OF 131-158</scope>
    <scope>FUNCTION</scope>
    <scope>CATALYTIC ACTIVITY</scope>
    <scope>BIOPHYSICOCHEMICAL PROPERTIES</scope>
    <scope>SUBCELLULAR LOCATION</scope>
    <scope>BLOCKAGE OF N-TERMINUS</scope>
    <source>
        <strain>Fischer 344</strain>
        <tissue>Liver</tissue>
    </source>
</reference>
<reference key="5">
    <citation type="journal article" date="2012" name="Nat. Commun.">
        <title>Quantitative maps of protein phosphorylation sites across 14 different rat organs and tissues.</title>
        <authorList>
            <person name="Lundby A."/>
            <person name="Secher A."/>
            <person name="Lage K."/>
            <person name="Nordsborg N.B."/>
            <person name="Dmytriyev A."/>
            <person name="Lundby C."/>
            <person name="Olsen J.V."/>
        </authorList>
    </citation>
    <scope>PHOSPHORYLATION [LARGE SCALE ANALYSIS] AT SER-137 AND SER-181</scope>
    <scope>IDENTIFICATION BY MASS SPECTROMETRY [LARGE SCALE ANALYSIS]</scope>
</reference>
<sequence length="216" mass="23961">MQAGKPVLYSYFRSSCSWRVRIALALKGIDYEIVPINLIKDGGQQFSEEFQTLNPMKQVPALKIDGITIGQSLAILEYLEETRPIPRLLPQDPQKRAIVRMISDLIASGIQPLQNLSVLKQVGQENQMPWAQKAITSGFNALEKILQSTAGKYCVGDEVSMADVCLAPQVANAERFKVDLSPYPTISHINKALLALEAFQVSHPCRQPDTPAELRT</sequence>
<protein>
    <recommendedName>
        <fullName>Maleylacetoacetate isomerase</fullName>
        <shortName>MAAI</shortName>
        <ecNumber>5.2.1.2</ecNumber>
    </recommendedName>
    <alternativeName>
        <fullName>GSTZ1-1</fullName>
    </alternativeName>
    <alternativeName>
        <fullName>Glutathione S-transferase zeta 1</fullName>
        <ecNumber>2.5.1.18</ecNumber>
    </alternativeName>
</protein>
<accession>P57113</accession>
<accession>B0BNI1</accession>